<protein>
    <recommendedName>
        <fullName>ATP-dependent RNA helicase DDX1</fullName>
        <ecNumber>3.6.4.13</ecNumber>
    </recommendedName>
    <alternativeName>
        <fullName>DEAD box protein 1</fullName>
    </alternativeName>
</protein>
<keyword id="KW-0010">Activator</keyword>
<keyword id="KW-0067">ATP-binding</keyword>
<keyword id="KW-0963">Cytoplasm</keyword>
<keyword id="KW-0238">DNA-binding</keyword>
<keyword id="KW-0269">Exonuclease</keyword>
<keyword id="KW-0347">Helicase</keyword>
<keyword id="KW-0378">Hydrolase</keyword>
<keyword id="KW-0496">Mitochondrion</keyword>
<keyword id="KW-0507">mRNA processing</keyword>
<keyword id="KW-0540">Nuclease</keyword>
<keyword id="KW-0547">Nucleotide-binding</keyword>
<keyword id="KW-0539">Nucleus</keyword>
<keyword id="KW-1185">Reference proteome</keyword>
<keyword id="KW-0694">RNA-binding</keyword>
<keyword id="KW-0804">Transcription</keyword>
<keyword id="KW-0805">Transcription regulation</keyword>
<keyword id="KW-0819">tRNA processing</keyword>
<gene>
    <name type="primary">DDX1</name>
</gene>
<dbReference type="EC" id="3.6.4.13"/>
<dbReference type="EMBL" id="AY057383">
    <property type="protein sequence ID" value="AAL15417.1"/>
    <property type="molecule type" value="mRNA"/>
</dbReference>
<dbReference type="RefSeq" id="NP_989894.1">
    <property type="nucleotide sequence ID" value="NM_204563.1"/>
</dbReference>
<dbReference type="SMR" id="Q90WU3"/>
<dbReference type="BioGRID" id="675543">
    <property type="interactions" value="1"/>
</dbReference>
<dbReference type="FunCoup" id="Q90WU3">
    <property type="interactions" value="2774"/>
</dbReference>
<dbReference type="STRING" id="9031.ENSGALP00000026509"/>
<dbReference type="PaxDb" id="9031-ENSGALP00000026509"/>
<dbReference type="GeneID" id="395249"/>
<dbReference type="KEGG" id="gga:395249"/>
<dbReference type="CTD" id="1653"/>
<dbReference type="VEuPathDB" id="HostDB:geneid_395249"/>
<dbReference type="eggNOG" id="KOG0349">
    <property type="taxonomic scope" value="Eukaryota"/>
</dbReference>
<dbReference type="InParanoid" id="Q90WU3"/>
<dbReference type="OrthoDB" id="1735at2759"/>
<dbReference type="PhylomeDB" id="Q90WU3"/>
<dbReference type="PRO" id="PR:Q90WU3"/>
<dbReference type="Proteomes" id="UP000000539">
    <property type="component" value="Unassembled WGS sequence"/>
</dbReference>
<dbReference type="GO" id="GO:0005737">
    <property type="term" value="C:cytoplasm"/>
    <property type="evidence" value="ECO:0000250"/>
    <property type="project" value="UniProtKB"/>
</dbReference>
<dbReference type="GO" id="GO:0005829">
    <property type="term" value="C:cytosol"/>
    <property type="evidence" value="ECO:0000250"/>
    <property type="project" value="UniProtKB"/>
</dbReference>
<dbReference type="GO" id="GO:0005739">
    <property type="term" value="C:mitochondrion"/>
    <property type="evidence" value="ECO:0000250"/>
    <property type="project" value="UniProtKB"/>
</dbReference>
<dbReference type="GO" id="GO:0005634">
    <property type="term" value="C:nucleus"/>
    <property type="evidence" value="ECO:0000250"/>
    <property type="project" value="UniProtKB"/>
</dbReference>
<dbReference type="GO" id="GO:0072669">
    <property type="term" value="C:tRNA-splicing ligase complex"/>
    <property type="evidence" value="ECO:0000250"/>
    <property type="project" value="UniProtKB"/>
</dbReference>
<dbReference type="GO" id="GO:0005524">
    <property type="term" value="F:ATP binding"/>
    <property type="evidence" value="ECO:0007669"/>
    <property type="project" value="UniProtKB-KW"/>
</dbReference>
<dbReference type="GO" id="GO:0016887">
    <property type="term" value="F:ATP hydrolysis activity"/>
    <property type="evidence" value="ECO:0007669"/>
    <property type="project" value="RHEA"/>
</dbReference>
<dbReference type="GO" id="GO:0003682">
    <property type="term" value="F:chromatin binding"/>
    <property type="evidence" value="ECO:0000250"/>
    <property type="project" value="UniProtKB"/>
</dbReference>
<dbReference type="GO" id="GO:0003677">
    <property type="term" value="F:DNA binding"/>
    <property type="evidence" value="ECO:0007669"/>
    <property type="project" value="UniProtKB-KW"/>
</dbReference>
<dbReference type="GO" id="GO:0033677">
    <property type="term" value="F:DNA/RNA helicase activity"/>
    <property type="evidence" value="ECO:0000250"/>
    <property type="project" value="UniProtKB"/>
</dbReference>
<dbReference type="GO" id="GO:0004527">
    <property type="term" value="F:exonuclease activity"/>
    <property type="evidence" value="ECO:0007669"/>
    <property type="project" value="UniProtKB-KW"/>
</dbReference>
<dbReference type="GO" id="GO:0004518">
    <property type="term" value="F:nuclease activity"/>
    <property type="evidence" value="ECO:0000250"/>
    <property type="project" value="UniProtKB"/>
</dbReference>
<dbReference type="GO" id="GO:0008143">
    <property type="term" value="F:poly(A) binding"/>
    <property type="evidence" value="ECO:0000250"/>
    <property type="project" value="UniProtKB"/>
</dbReference>
<dbReference type="GO" id="GO:0003724">
    <property type="term" value="F:RNA helicase activity"/>
    <property type="evidence" value="ECO:0000250"/>
    <property type="project" value="UniProtKB"/>
</dbReference>
<dbReference type="GO" id="GO:0003712">
    <property type="term" value="F:transcription coregulator activity"/>
    <property type="evidence" value="ECO:0000250"/>
    <property type="project" value="UniProtKB"/>
</dbReference>
<dbReference type="GO" id="GO:0006302">
    <property type="term" value="P:double-strand break repair"/>
    <property type="evidence" value="ECO:0000250"/>
    <property type="project" value="UniProtKB"/>
</dbReference>
<dbReference type="GO" id="GO:0006397">
    <property type="term" value="P:mRNA processing"/>
    <property type="evidence" value="ECO:0007669"/>
    <property type="project" value="UniProtKB-KW"/>
</dbReference>
<dbReference type="GO" id="GO:0006388">
    <property type="term" value="P:tRNA splicing, via endonucleolytic cleavage and ligation"/>
    <property type="evidence" value="ECO:0000250"/>
    <property type="project" value="UniProtKB"/>
</dbReference>
<dbReference type="CDD" id="cd17938">
    <property type="entry name" value="DEADc_DDX1"/>
    <property type="match status" value="1"/>
</dbReference>
<dbReference type="CDD" id="cd18787">
    <property type="entry name" value="SF2_C_DEAD"/>
    <property type="match status" value="1"/>
</dbReference>
<dbReference type="CDD" id="cd12873">
    <property type="entry name" value="SPRY_DDX1"/>
    <property type="match status" value="1"/>
</dbReference>
<dbReference type="FunFam" id="2.60.120.920:FF:000013">
    <property type="entry name" value="ATP-dependent RNA helicase DDX1"/>
    <property type="match status" value="1"/>
</dbReference>
<dbReference type="FunFam" id="3.40.50.300:FF:000652">
    <property type="entry name" value="ATP-dependent RNA helicase DDX1"/>
    <property type="match status" value="1"/>
</dbReference>
<dbReference type="FunFam" id="3.40.50.300:FF:000708">
    <property type="entry name" value="ATP-dependent RNA helicase DDX1"/>
    <property type="match status" value="1"/>
</dbReference>
<dbReference type="FunFam" id="3.40.50.300:FF:000716">
    <property type="entry name" value="ATP-dependent RNA helicase DDX1"/>
    <property type="match status" value="1"/>
</dbReference>
<dbReference type="Gene3D" id="2.60.120.920">
    <property type="match status" value="1"/>
</dbReference>
<dbReference type="Gene3D" id="3.40.50.300">
    <property type="entry name" value="P-loop containing nucleotide triphosphate hydrolases"/>
    <property type="match status" value="3"/>
</dbReference>
<dbReference type="InterPro" id="IPR001870">
    <property type="entry name" value="B30.2/SPRY"/>
</dbReference>
<dbReference type="InterPro" id="IPR043136">
    <property type="entry name" value="B30.2/SPRY_sf"/>
</dbReference>
<dbReference type="InterPro" id="IPR013320">
    <property type="entry name" value="ConA-like_dom_sf"/>
</dbReference>
<dbReference type="InterPro" id="IPR011545">
    <property type="entry name" value="DEAD/DEAH_box_helicase_dom"/>
</dbReference>
<dbReference type="InterPro" id="IPR014001">
    <property type="entry name" value="Helicase_ATP-bd"/>
</dbReference>
<dbReference type="InterPro" id="IPR001650">
    <property type="entry name" value="Helicase_C-like"/>
</dbReference>
<dbReference type="InterPro" id="IPR027417">
    <property type="entry name" value="P-loop_NTPase"/>
</dbReference>
<dbReference type="InterPro" id="IPR014014">
    <property type="entry name" value="RNA_helicase_DEAD_Q_motif"/>
</dbReference>
<dbReference type="InterPro" id="IPR003877">
    <property type="entry name" value="SPRY_dom"/>
</dbReference>
<dbReference type="PANTHER" id="PTHR24031">
    <property type="entry name" value="RNA HELICASE"/>
    <property type="match status" value="1"/>
</dbReference>
<dbReference type="Pfam" id="PF00270">
    <property type="entry name" value="DEAD"/>
    <property type="match status" value="2"/>
</dbReference>
<dbReference type="Pfam" id="PF00271">
    <property type="entry name" value="Helicase_C"/>
    <property type="match status" value="1"/>
</dbReference>
<dbReference type="Pfam" id="PF00622">
    <property type="entry name" value="SPRY"/>
    <property type="match status" value="1"/>
</dbReference>
<dbReference type="SMART" id="SM00487">
    <property type="entry name" value="DEXDc"/>
    <property type="match status" value="1"/>
</dbReference>
<dbReference type="SMART" id="SM00490">
    <property type="entry name" value="HELICc"/>
    <property type="match status" value="1"/>
</dbReference>
<dbReference type="SMART" id="SM00449">
    <property type="entry name" value="SPRY"/>
    <property type="match status" value="1"/>
</dbReference>
<dbReference type="SUPFAM" id="SSF49899">
    <property type="entry name" value="Concanavalin A-like lectins/glucanases"/>
    <property type="match status" value="1"/>
</dbReference>
<dbReference type="SUPFAM" id="SSF52540">
    <property type="entry name" value="P-loop containing nucleoside triphosphate hydrolases"/>
    <property type="match status" value="2"/>
</dbReference>
<dbReference type="PROSITE" id="PS50188">
    <property type="entry name" value="B302_SPRY"/>
    <property type="match status" value="1"/>
</dbReference>
<dbReference type="PROSITE" id="PS51192">
    <property type="entry name" value="HELICASE_ATP_BIND_1"/>
    <property type="match status" value="2"/>
</dbReference>
<dbReference type="PROSITE" id="PS51194">
    <property type="entry name" value="HELICASE_CTER"/>
    <property type="match status" value="1"/>
</dbReference>
<dbReference type="PROSITE" id="PS51195">
    <property type="entry name" value="Q_MOTIF"/>
    <property type="match status" value="1"/>
</dbReference>
<reference key="1">
    <citation type="journal article" date="2002" name="Biochim. Biophys. Acta">
        <title>Cloning and expression analysis of the chicken DEAD box gene DDX1.</title>
        <authorList>
            <person name="Godbout R."/>
            <person name="Packer M."/>
            <person name="Katyal S."/>
            <person name="Bleoo S."/>
        </authorList>
    </citation>
    <scope>NUCLEOTIDE SEQUENCE [MRNA]</scope>
    <scope>TISSUE SPECIFICITY</scope>
    <source>
        <tissue>Embryonic retina</tissue>
    </source>
</reference>
<comment type="function">
    <text evidence="1 2">Acts as an ATP-dependent RNA helicase, able to unwind both RNA-RNA and RNA-DNA duplexes. Possesses 5' single-stranded RNA overhang nuclease activity. Acts as a positive regulator of transcription. May be involved in 3'-end cleavage and polyadenylation of pre-mRNAs. Binds DNA and RNA. Component of the tRNA-splicing ligase complex required to facilitate the enzymatic turnover of catalytic subunit RTCB (By similarity). Binds (via helicase ATP-binding domain) on both short and long poly(I:C) dsRNA (By similarity).</text>
</comment>
<comment type="catalytic activity">
    <reaction>
        <text>ATP + H2O = ADP + phosphate + H(+)</text>
        <dbReference type="Rhea" id="RHEA:13065"/>
        <dbReference type="ChEBI" id="CHEBI:15377"/>
        <dbReference type="ChEBI" id="CHEBI:15378"/>
        <dbReference type="ChEBI" id="CHEBI:30616"/>
        <dbReference type="ChEBI" id="CHEBI:43474"/>
        <dbReference type="ChEBI" id="CHEBI:456216"/>
        <dbReference type="EC" id="3.6.4.13"/>
    </reaction>
</comment>
<comment type="subcellular location">
    <subcellularLocation>
        <location evidence="2">Nucleus</location>
    </subcellularLocation>
    <subcellularLocation>
        <location evidence="2">Cytoplasm</location>
    </subcellularLocation>
    <subcellularLocation>
        <location evidence="2">Cytoplasmic granule</location>
    </subcellularLocation>
    <subcellularLocation>
        <location evidence="1">Cytoplasm</location>
        <location evidence="1">Cytosol</location>
    </subcellularLocation>
    <subcellularLocation>
        <location evidence="1">Mitochondrion</location>
    </subcellularLocation>
</comment>
<comment type="tissue specificity">
    <text evidence="6">Detected in embryonic retina, brain, heart and liver (at protein level). Detected in embryonic retina, brain, heart, kidney and liver.</text>
</comment>
<comment type="domain">
    <text evidence="2">The helicase domain is involved in the stimulation of RELA transcriptional activity.</text>
</comment>
<comment type="similarity">
    <text evidence="7">Belongs to the DEAD box helicase family. DDX1 subfamily.</text>
</comment>
<name>DDX1_CHICK</name>
<sequence length="740" mass="82484">MAAFSEMGVMPEIAQAVEEMDWLLPTDIQAESIPLILGGGDVLMAAETGSGKTGAFSIPVIQIVYETLKDQMEGKKGKATIKTGGAVLNKWQMNPYDRGSAFAIGSDGLCCQSREVKEWHGCRATRGVTKGKYYYEVSCHDQGLCRVGWSTMQASLDLGTDKFGFGFGGTGKKSHNKQFDSYGEEFTMHDTIGCYLDIDKGQIKFSKNGKDLGLAFEFPPHIRNQALFAACVLKNAELKFNFGEEDFKFPPKDGYIGLCKAPDGNVVKSQHTGNAQVVQTQNLPNAPKALIVEPSRELAEQTLNNVKQFKKYIDNPKLRELLIIGGVAARDQLSVLEQGVDIVVGTPGRLDDLVSTGKLNLSQVRFLVLDEADGLLLQGYSDFINRIHSQIPQITSDGKRLQVIVCSATLHSFDVKKLSEKIMHFPTWVDLKGEDSVPETVHHVVVIVNPKTDKLWERLGKNHIRTDEVHAKDNTLPGANTPEMWSEAIKILKGEYTVRAIKEHKMDQAIIFCRTKIDCDNMEQYFIQQGGGPDRKGHQFSCVCLHGDRKPQERKQNLERFKRGDVRFLICTDVAARGIDIHGVPYVINVTLPDEKQNYVHRIGRVGRAERMGLAISLVAKEKEKVWYHVCSSRGKGCYNTRLKEEGGCTIWYNEMQLLGEIEEHLNCTISQVEPDIKVPVDDFDGKVTYGQKRALGGGLYKGHVDILAPTVQELAALEKEAQTSFLHLGYLPNQLFRTF</sequence>
<accession>Q90WU3</accession>
<feature type="chain" id="PRO_0000312359" description="ATP-dependent RNA helicase DDX1">
    <location>
        <begin position="1"/>
        <end position="740"/>
    </location>
</feature>
<feature type="domain" description="Helicase ATP-binding" evidence="3">
    <location>
        <begin position="2"/>
        <end position="428"/>
    </location>
</feature>
<feature type="domain" description="B30.2/SPRY" evidence="5">
    <location>
        <begin position="70"/>
        <end position="247"/>
    </location>
</feature>
<feature type="domain" description="Helicase C-terminal" evidence="4">
    <location>
        <begin position="493"/>
        <end position="681"/>
    </location>
</feature>
<feature type="region of interest" description="Interaction with dsRNA" evidence="1">
    <location>
        <begin position="1"/>
        <end position="448"/>
    </location>
</feature>
<feature type="short sequence motif" description="DEAD box" evidence="3">
    <location>
        <begin position="370"/>
        <end position="373"/>
    </location>
</feature>
<feature type="binding site" evidence="3">
    <location>
        <begin position="46"/>
        <end position="53"/>
    </location>
    <ligand>
        <name>ATP</name>
        <dbReference type="ChEBI" id="CHEBI:30616"/>
    </ligand>
</feature>
<organism>
    <name type="scientific">Gallus gallus</name>
    <name type="common">Chicken</name>
    <dbReference type="NCBI Taxonomy" id="9031"/>
    <lineage>
        <taxon>Eukaryota</taxon>
        <taxon>Metazoa</taxon>
        <taxon>Chordata</taxon>
        <taxon>Craniata</taxon>
        <taxon>Vertebrata</taxon>
        <taxon>Euteleostomi</taxon>
        <taxon>Archelosauria</taxon>
        <taxon>Archosauria</taxon>
        <taxon>Dinosauria</taxon>
        <taxon>Saurischia</taxon>
        <taxon>Theropoda</taxon>
        <taxon>Coelurosauria</taxon>
        <taxon>Aves</taxon>
        <taxon>Neognathae</taxon>
        <taxon>Galloanserae</taxon>
        <taxon>Galliformes</taxon>
        <taxon>Phasianidae</taxon>
        <taxon>Phasianinae</taxon>
        <taxon>Gallus</taxon>
    </lineage>
</organism>
<proteinExistence type="evidence at protein level"/>
<evidence type="ECO:0000250" key="1">
    <source>
        <dbReference type="UniProtKB" id="Q91VR5"/>
    </source>
</evidence>
<evidence type="ECO:0000250" key="2">
    <source>
        <dbReference type="UniProtKB" id="Q92499"/>
    </source>
</evidence>
<evidence type="ECO:0000255" key="3">
    <source>
        <dbReference type="PROSITE-ProRule" id="PRU00541"/>
    </source>
</evidence>
<evidence type="ECO:0000255" key="4">
    <source>
        <dbReference type="PROSITE-ProRule" id="PRU00542"/>
    </source>
</evidence>
<evidence type="ECO:0000255" key="5">
    <source>
        <dbReference type="PROSITE-ProRule" id="PRU00548"/>
    </source>
</evidence>
<evidence type="ECO:0000269" key="6">
    <source>
    </source>
</evidence>
<evidence type="ECO:0000305" key="7"/>